<dbReference type="EMBL" id="AE017220">
    <property type="protein sequence ID" value="AAX67353.1"/>
    <property type="molecule type" value="Genomic_DNA"/>
</dbReference>
<dbReference type="RefSeq" id="WP_001541025.1">
    <property type="nucleotide sequence ID" value="NC_006905.1"/>
</dbReference>
<dbReference type="SMR" id="Q57IV9"/>
<dbReference type="KEGG" id="sec:SCH_3447"/>
<dbReference type="HOGENOM" id="CLU_006325_3_0_6"/>
<dbReference type="Proteomes" id="UP000000538">
    <property type="component" value="Chromosome"/>
</dbReference>
<dbReference type="GO" id="GO:0005524">
    <property type="term" value="F:ATP binding"/>
    <property type="evidence" value="ECO:0007669"/>
    <property type="project" value="UniProtKB-UniRule"/>
</dbReference>
<dbReference type="GO" id="GO:0003677">
    <property type="term" value="F:DNA binding"/>
    <property type="evidence" value="ECO:0007669"/>
    <property type="project" value="UniProtKB-KW"/>
</dbReference>
<dbReference type="GO" id="GO:0003700">
    <property type="term" value="F:DNA-binding transcription factor activity"/>
    <property type="evidence" value="ECO:0007669"/>
    <property type="project" value="UniProtKB-UniRule"/>
</dbReference>
<dbReference type="GO" id="GO:0045913">
    <property type="term" value="P:positive regulation of carbohydrate metabolic process"/>
    <property type="evidence" value="ECO:0007669"/>
    <property type="project" value="UniProtKB-UniRule"/>
</dbReference>
<dbReference type="GO" id="GO:0045893">
    <property type="term" value="P:positive regulation of DNA-templated transcription"/>
    <property type="evidence" value="ECO:0007669"/>
    <property type="project" value="UniProtKB-UniRule"/>
</dbReference>
<dbReference type="CDD" id="cd06170">
    <property type="entry name" value="LuxR_C_like"/>
    <property type="match status" value="1"/>
</dbReference>
<dbReference type="FunFam" id="1.10.10.10:FF:000115">
    <property type="entry name" value="HTH-type transcriptional regulator MalT"/>
    <property type="match status" value="1"/>
</dbReference>
<dbReference type="Gene3D" id="1.25.40.10">
    <property type="entry name" value="Tetratricopeptide repeat domain"/>
    <property type="match status" value="1"/>
</dbReference>
<dbReference type="Gene3D" id="1.10.10.10">
    <property type="entry name" value="Winged helix-like DNA-binding domain superfamily/Winged helix DNA-binding domain"/>
    <property type="match status" value="1"/>
</dbReference>
<dbReference type="HAMAP" id="MF_01247">
    <property type="entry name" value="HTH_type_MalT"/>
    <property type="match status" value="1"/>
</dbReference>
<dbReference type="InterPro" id="IPR027417">
    <property type="entry name" value="P-loop_NTPase"/>
</dbReference>
<dbReference type="InterPro" id="IPR016032">
    <property type="entry name" value="Sig_transdc_resp-reg_C-effctor"/>
</dbReference>
<dbReference type="InterPro" id="IPR011990">
    <property type="entry name" value="TPR-like_helical_dom_sf"/>
</dbReference>
<dbReference type="InterPro" id="IPR041617">
    <property type="entry name" value="TPR_MalT"/>
</dbReference>
<dbReference type="InterPro" id="IPR023768">
    <property type="entry name" value="Tscrpt_reg_HTH_MalT"/>
</dbReference>
<dbReference type="InterPro" id="IPR000792">
    <property type="entry name" value="Tscrpt_reg_LuxR_C"/>
</dbReference>
<dbReference type="InterPro" id="IPR036388">
    <property type="entry name" value="WH-like_DNA-bd_sf"/>
</dbReference>
<dbReference type="NCBIfam" id="NF003420">
    <property type="entry name" value="PRK04841.1"/>
    <property type="match status" value="1"/>
</dbReference>
<dbReference type="PANTHER" id="PTHR44688">
    <property type="entry name" value="DNA-BINDING TRANSCRIPTIONAL ACTIVATOR DEVR_DOSR"/>
    <property type="match status" value="1"/>
</dbReference>
<dbReference type="PANTHER" id="PTHR44688:SF16">
    <property type="entry name" value="DNA-BINDING TRANSCRIPTIONAL ACTIVATOR DEVR_DOSR"/>
    <property type="match status" value="1"/>
</dbReference>
<dbReference type="Pfam" id="PF00196">
    <property type="entry name" value="GerE"/>
    <property type="match status" value="1"/>
</dbReference>
<dbReference type="Pfam" id="PF17874">
    <property type="entry name" value="TPR_MalT"/>
    <property type="match status" value="1"/>
</dbReference>
<dbReference type="PRINTS" id="PR00038">
    <property type="entry name" value="HTHLUXR"/>
</dbReference>
<dbReference type="SMART" id="SM00421">
    <property type="entry name" value="HTH_LUXR"/>
    <property type="match status" value="1"/>
</dbReference>
<dbReference type="SUPFAM" id="SSF46894">
    <property type="entry name" value="C-terminal effector domain of the bipartite response regulators"/>
    <property type="match status" value="1"/>
</dbReference>
<dbReference type="SUPFAM" id="SSF52540">
    <property type="entry name" value="P-loop containing nucleoside triphosphate hydrolases"/>
    <property type="match status" value="1"/>
</dbReference>
<dbReference type="SUPFAM" id="SSF48452">
    <property type="entry name" value="TPR-like"/>
    <property type="match status" value="1"/>
</dbReference>
<dbReference type="PROSITE" id="PS00622">
    <property type="entry name" value="HTH_LUXR_1"/>
    <property type="match status" value="1"/>
</dbReference>
<dbReference type="PROSITE" id="PS50043">
    <property type="entry name" value="HTH_LUXR_2"/>
    <property type="match status" value="1"/>
</dbReference>
<gene>
    <name evidence="1" type="primary">malT</name>
    <name type="ordered locus">SCH_3447</name>
</gene>
<organism>
    <name type="scientific">Salmonella choleraesuis (strain SC-B67)</name>
    <dbReference type="NCBI Taxonomy" id="321314"/>
    <lineage>
        <taxon>Bacteria</taxon>
        <taxon>Pseudomonadati</taxon>
        <taxon>Pseudomonadota</taxon>
        <taxon>Gammaproteobacteria</taxon>
        <taxon>Enterobacterales</taxon>
        <taxon>Enterobacteriaceae</taxon>
        <taxon>Salmonella</taxon>
    </lineage>
</organism>
<evidence type="ECO:0000255" key="1">
    <source>
        <dbReference type="HAMAP-Rule" id="MF_01247"/>
    </source>
</evidence>
<accession>Q57IV9</accession>
<sequence length="901" mass="102980">MLIPSKLSRPVRLDHTVVRERLLAKLSGANNFRLALVTSPAGYGKTTLVSQWAAGKNELGWYSLDEGDNQQERFASYLIAAIQQATGGHCSTSEAMAQKRQYASLTSLFAQLFIELAQWHRPLYLVIDDYHLITNPVIHDAMRFFLRHQPENFTLVVLSRNLPQLGIANLRVRDQLLEIGSQQLAFNHQEAKQFFDRRLSSPIEAAESSRMCDDVAGWATALQLIALSARQNHTSAHHSARRLAGINASHLSDYLVDEVLDNVDVSTRHFLLKSAILRSMNDALIVRVTGEENGQMRLEEIERQGLFLQRMDDTGEWFSYHPSFGSFLRQRCQWELAAELSEIHRAAAESWMEQGFPSEAIHHALAAGDAQMLRDILLNHAWGLFNHSELALLEESLKALPWESLLENPRLVLLQAWLMQSQHRYSEVNTLLARAEQEIKGVMDGTLHAEFNALRAQVAINDGNPEEAERLAKLALDELPLAWFYSRIVATSVHGEVLHCKGDLSQSLSLMQQTEQMARHHDVWHYALWSLIQQSEIQFAQGFLQAAWETQERAFQLIKEQHLEQLPMHEFLVRIRAQLLWAWARLDEAEASARSGIAVLSTFQPQQQLQCLTLLVQCSLARGDLDNARSQLNRLENLLGNGRYHCDWISNADKVRVIYWQLTGDKKSAANWLRHTPKPAFANNHFLQGQWRNIARAQILLGEFEPAEIVLEELNENARSLRLMSDLNRNLLLLNQLYWQSGRKNDAQRVLLDALQLANRTGFISHFVIEGEAMAQQLRQLIQLNTLPEMEQHRAQRILREINQHHRHKFAHFDEGFVERLLNHPDVPELIRTSPLTQREWQVLGLIYSGYSNEQIAGELAVAATTIKTHIRNLYQKLGVAHRQDAVQHAQQLLKMMGYGV</sequence>
<protein>
    <recommendedName>
        <fullName evidence="1">HTH-type transcriptional regulator MalT</fullName>
    </recommendedName>
    <alternativeName>
        <fullName evidence="1">ATP-dependent transcriptional activator MalT</fullName>
    </alternativeName>
</protein>
<feature type="chain" id="PRO_1000085775" description="HTH-type transcriptional regulator MalT">
    <location>
        <begin position="1"/>
        <end position="901"/>
    </location>
</feature>
<feature type="domain" description="HTH luxR-type" evidence="1">
    <location>
        <begin position="829"/>
        <end position="894"/>
    </location>
</feature>
<feature type="DNA-binding region" description="H-T-H motif" evidence="1">
    <location>
        <begin position="853"/>
        <end position="872"/>
    </location>
</feature>
<feature type="binding site" evidence="1">
    <location>
        <begin position="39"/>
        <end position="46"/>
    </location>
    <ligand>
        <name>ATP</name>
        <dbReference type="ChEBI" id="CHEBI:30616"/>
    </ligand>
</feature>
<comment type="function">
    <text evidence="1">Positively regulates the transcription of the maltose regulon whose gene products are responsible for uptake and catabolism of malto-oligosaccharides. Specifically binds to the promoter region of its target genes, recognizing a short DNA motif called the MalT box.</text>
</comment>
<comment type="activity regulation">
    <text evidence="1">Activated by ATP and maltotriose, which are both required for DNA binding.</text>
</comment>
<comment type="subunit">
    <text evidence="1">Monomer in solution. Oligomerizes to an active state in the presence of the positive effectors ATP and maltotriose.</text>
</comment>
<comment type="similarity">
    <text evidence="1">Belongs to the MalT family.</text>
</comment>
<keyword id="KW-0010">Activator</keyword>
<keyword id="KW-0067">ATP-binding</keyword>
<keyword id="KW-0119">Carbohydrate metabolism</keyword>
<keyword id="KW-0238">DNA-binding</keyword>
<keyword id="KW-0547">Nucleotide-binding</keyword>
<keyword id="KW-0804">Transcription</keyword>
<keyword id="KW-0805">Transcription regulation</keyword>
<reference key="1">
    <citation type="journal article" date="2005" name="Nucleic Acids Res.">
        <title>The genome sequence of Salmonella enterica serovar Choleraesuis, a highly invasive and resistant zoonotic pathogen.</title>
        <authorList>
            <person name="Chiu C.-H."/>
            <person name="Tang P."/>
            <person name="Chu C."/>
            <person name="Hu S."/>
            <person name="Bao Q."/>
            <person name="Yu J."/>
            <person name="Chou Y.-Y."/>
            <person name="Wang H.-S."/>
            <person name="Lee Y.-S."/>
        </authorList>
    </citation>
    <scope>NUCLEOTIDE SEQUENCE [LARGE SCALE GENOMIC DNA]</scope>
    <source>
        <strain>SC-B67</strain>
    </source>
</reference>
<name>MALT_SALCH</name>
<proteinExistence type="inferred from homology"/>